<accession>Q813A2</accession>
<feature type="chain" id="PRO_0000294488" description="UPF0457 protein BC_3525">
    <location>
        <begin position="1"/>
        <end position="84"/>
    </location>
</feature>
<reference key="1">
    <citation type="journal article" date="2003" name="Nature">
        <title>Genome sequence of Bacillus cereus and comparative analysis with Bacillus anthracis.</title>
        <authorList>
            <person name="Ivanova N."/>
            <person name="Sorokin A."/>
            <person name="Anderson I."/>
            <person name="Galleron N."/>
            <person name="Candelon B."/>
            <person name="Kapatral V."/>
            <person name="Bhattacharyya A."/>
            <person name="Reznik G."/>
            <person name="Mikhailova N."/>
            <person name="Lapidus A."/>
            <person name="Chu L."/>
            <person name="Mazur M."/>
            <person name="Goltsman E."/>
            <person name="Larsen N."/>
            <person name="D'Souza M."/>
            <person name="Walunas T."/>
            <person name="Grechkin Y."/>
            <person name="Pusch G."/>
            <person name="Haselkorn R."/>
            <person name="Fonstein M."/>
            <person name="Ehrlich S.D."/>
            <person name="Overbeek R."/>
            <person name="Kyrpides N.C."/>
        </authorList>
    </citation>
    <scope>NUCLEOTIDE SEQUENCE [LARGE SCALE GENOMIC DNA]</scope>
    <source>
        <strain>ATCC 14579 / DSM 31 / CCUG 7414 / JCM 2152 / NBRC 15305 / NCIMB 9373 / NCTC 2599 / NRRL B-3711</strain>
    </source>
</reference>
<keyword id="KW-1185">Reference proteome</keyword>
<organism>
    <name type="scientific">Bacillus cereus (strain ATCC 14579 / DSM 31 / CCUG 7414 / JCM 2152 / NBRC 15305 / NCIMB 9373 / NCTC 2599 / NRRL B-3711)</name>
    <dbReference type="NCBI Taxonomy" id="226900"/>
    <lineage>
        <taxon>Bacteria</taxon>
        <taxon>Bacillati</taxon>
        <taxon>Bacillota</taxon>
        <taxon>Bacilli</taxon>
        <taxon>Bacillales</taxon>
        <taxon>Bacillaceae</taxon>
        <taxon>Bacillus</taxon>
        <taxon>Bacillus cereus group</taxon>
    </lineage>
</organism>
<sequence length="84" mass="9373">MLGINVKKTNEELIISWQLAEITIPLRDVIEVTEDATYAGVEEVDVIRIGTAYGTTDRILIKTVKQNYVLFTTNKVAILNAIHA</sequence>
<gene>
    <name type="ordered locus">BC_3525</name>
</gene>
<name>Y3525_BACCR</name>
<comment type="similarity">
    <text evidence="1">Belongs to the UPF0457 family.</text>
</comment>
<comment type="sequence caution" evidence="1">
    <conflict type="erroneous initiation">
        <sequence resource="EMBL-CDS" id="AAP10459"/>
    </conflict>
</comment>
<protein>
    <recommendedName>
        <fullName>UPF0457 protein BC_3525</fullName>
    </recommendedName>
</protein>
<proteinExistence type="inferred from homology"/>
<evidence type="ECO:0000305" key="1"/>
<dbReference type="EMBL" id="AE016877">
    <property type="protein sequence ID" value="AAP10459.1"/>
    <property type="status" value="ALT_INIT"/>
    <property type="molecule type" value="Genomic_DNA"/>
</dbReference>
<dbReference type="RefSeq" id="NP_833258.1">
    <property type="nucleotide sequence ID" value="NC_004722.1"/>
</dbReference>
<dbReference type="RefSeq" id="WP_000900695.1">
    <property type="nucleotide sequence ID" value="NZ_CP138336.1"/>
</dbReference>
<dbReference type="KEGG" id="bce:BC3525"/>
<dbReference type="PATRIC" id="fig|226900.8.peg.3618"/>
<dbReference type="HOGENOM" id="CLU_174851_1_0_9"/>
<dbReference type="OrthoDB" id="2623008at2"/>
<dbReference type="Proteomes" id="UP000001417">
    <property type="component" value="Chromosome"/>
</dbReference>
<dbReference type="InterPro" id="IPR055365">
    <property type="entry name" value="PH_SunI-like"/>
</dbReference>
<dbReference type="Pfam" id="PF23491">
    <property type="entry name" value="bPH_8"/>
    <property type="match status" value="1"/>
</dbReference>